<feature type="chain" id="PRO_0000069209" description="C5a anaphylatoxin chemotactic receptor 1">
    <location>
        <begin position="1"/>
        <end position="350"/>
    </location>
</feature>
<feature type="topological domain" description="Extracellular" evidence="13">
    <location>
        <begin position="1"/>
        <end position="37"/>
    </location>
</feature>
<feature type="transmembrane region" description="Helical; Name=1" evidence="13">
    <location>
        <begin position="38"/>
        <end position="64"/>
    </location>
</feature>
<feature type="topological domain" description="Cytoplasmic" evidence="13">
    <location>
        <begin position="65"/>
        <end position="69"/>
    </location>
</feature>
<feature type="transmembrane region" description="Helical; Name=2" evidence="13">
    <location>
        <begin position="70"/>
        <end position="93"/>
    </location>
</feature>
<feature type="topological domain" description="Extracellular" evidence="13">
    <location>
        <begin position="94"/>
        <end position="110"/>
    </location>
</feature>
<feature type="transmembrane region" description="Helical; Name=3" evidence="13">
    <location>
        <begin position="111"/>
        <end position="132"/>
    </location>
</feature>
<feature type="topological domain" description="Cytoplasmic" evidence="13">
    <location>
        <begin position="133"/>
        <end position="153"/>
    </location>
</feature>
<feature type="transmembrane region" description="Helical; Name=4" evidence="13">
    <location>
        <begin position="154"/>
        <end position="174"/>
    </location>
</feature>
<feature type="topological domain" description="Extracellular" evidence="13">
    <location>
        <begin position="175"/>
        <end position="200"/>
    </location>
</feature>
<feature type="transmembrane region" description="Helical; Name=5" evidence="13">
    <location>
        <begin position="201"/>
        <end position="226"/>
    </location>
</feature>
<feature type="topological domain" description="Cytoplasmic" evidence="13">
    <location>
        <begin position="227"/>
        <end position="242"/>
    </location>
</feature>
<feature type="transmembrane region" description="Helical; Name=6" evidence="13">
    <location>
        <begin position="243"/>
        <end position="265"/>
    </location>
</feature>
<feature type="topological domain" description="Extracellular" evidence="13">
    <location>
        <begin position="266"/>
        <end position="282"/>
    </location>
</feature>
<feature type="transmembrane region" description="Helical; Name=7" evidence="13">
    <location>
        <begin position="283"/>
        <end position="303"/>
    </location>
</feature>
<feature type="topological domain" description="Cytoplasmic" evidence="13">
    <location>
        <begin position="304"/>
        <end position="350"/>
    </location>
</feature>
<feature type="region of interest" description="Required for CHIPS binding" evidence="9">
    <location>
        <begin position="10"/>
        <end position="18"/>
    </location>
</feature>
<feature type="region of interest" description="Involved in C5a binding" evidence="18">
    <location>
        <begin position="21"/>
        <end position="30"/>
    </location>
</feature>
<feature type="modified residue" description="Sulfotyrosine" evidence="4">
    <location>
        <position position="11"/>
    </location>
</feature>
<feature type="modified residue" description="Sulfotyrosine" evidence="4">
    <location>
        <position position="14"/>
    </location>
</feature>
<feature type="modified residue" description="Phosphoserine" evidence="23">
    <location>
        <position position="314"/>
    </location>
</feature>
<feature type="modified residue" description="Phosphoserine" evidence="3 15">
    <location>
        <position position="317"/>
    </location>
</feature>
<feature type="modified residue" description="Phosphoserine" evidence="3 15">
    <location>
        <position position="327"/>
    </location>
</feature>
<feature type="modified residue" description="Phosphoserine" evidence="3 15">
    <location>
        <position position="332"/>
    </location>
</feature>
<feature type="modified residue" description="Phosphoserine" evidence="3 15">
    <location>
        <position position="334"/>
    </location>
</feature>
<feature type="modified residue" description="Phosphoserine" evidence="3 15">
    <location>
        <position position="338"/>
    </location>
</feature>
<feature type="glycosylation site" description="N-linked (GlcNAc...) asparagine" evidence="1">
    <location>
        <position position="5"/>
    </location>
</feature>
<feature type="disulfide bond" evidence="2 13 24">
    <location>
        <begin position="109"/>
        <end position="188"/>
    </location>
</feature>
<feature type="sequence variant" id="VAR_049377" description="In dbSNP:rs4467185." evidence="8 10 11 17 19 20">
    <original>D</original>
    <variation>N</variation>
    <location>
        <position position="2"/>
    </location>
</feature>
<feature type="sequence variant" id="VAR_049378" description="In dbSNP:rs11880097." evidence="8 10 11 19 20">
    <original>K</original>
    <variation>N</variation>
    <location>
        <position position="279"/>
    </location>
</feature>
<feature type="mutagenesis site" description="Strongly impairs C5a binding (45,000-fold)." evidence="16">
    <location>
        <begin position="2"/>
        <end position="30"/>
    </location>
</feature>
<feature type="mutagenesis site" description="Impairs C5a binding. Strongly impairs C5a binding; when associated with A-27." evidence="16">
    <location>
        <begin position="2"/>
        <end position="22"/>
    </location>
</feature>
<feature type="mutagenesis site" description="Strongly impairs C5a binding; when associated with A-15; A-16; A-18 and A-21 (PubMed:8182049). Moderately impairs CHIPS binding (PubMed:15542591). Strongly impairs CHIPS binding; when associated with A-15 (PubMed:15542591). Strongly impairs CHIPS binding; when associated with A-18 (PubMed:15542591)." evidence="9 16">
    <original>D</original>
    <variation>A</variation>
    <location>
        <position position="10"/>
    </location>
</feature>
<feature type="mutagenesis site" description="Weakly impairs CHIPS binding. Loss of CHIPS binding; when associated with F-14." evidence="12">
    <original>Y</original>
    <variation>F</variation>
    <location>
        <position position="11"/>
    </location>
</feature>
<feature type="mutagenesis site" description="Moderately impairs CHIPS binding." evidence="9">
    <original>G</original>
    <variation>A</variation>
    <location>
        <position position="12"/>
    </location>
</feature>
<feature type="mutagenesis site" description="Weakly impairs CHIPS binding (PubMed:15542591). Strongly impairs CHIPS binding (PubMed:21706042). Loss of CHIPS binding; when associated with F-11 (PubMed:21706042)." evidence="9 12">
    <original>Y</original>
    <variation>F</variation>
    <location>
        <position position="14"/>
    </location>
</feature>
<feature type="mutagenesis site" description="Strongly impairs C5a binding; when associated with A-10; A-16; A-18 and A-21 (PubMed:8182049). Moderately impairs CHIPS binding (PubMed:15542591). Strongly impairs CHIPS binding; when associated with A-10 (PubMed:15542591). Strongly impairs CHIPS binding; when associated with A-18 (PubMed:15542591)." evidence="9 16">
    <original>D</original>
    <variation>A</variation>
    <location>
        <position position="15"/>
    </location>
</feature>
<feature type="mutagenesis site" description="Strongly impairs C5a binding; when associated with A-10; A-15; A-18 and A-21." evidence="16">
    <original>D</original>
    <variation>A</variation>
    <location>
        <position position="16"/>
    </location>
</feature>
<feature type="mutagenesis site" description="Strongly impairs C5a binding; when associated with A-10; A-15; A-16 and A-21 (PubMed:8182049). Impairs CHIPS binding (PubMed:15542591). Strongly impairs CHIPS binding; when associated with A-10 (PubMed:15542591). Strongly impairs CHIPS binding; when associated with A-15 (PubMed:15542591)." evidence="9 16">
    <original>D</original>
    <variation>A</variation>
    <location>
        <position position="18"/>
    </location>
</feature>
<feature type="mutagenesis site" description="Strongly impairs C5a binding; when associated with A-10; A-15; A-16 and A-18." evidence="16">
    <original>D</original>
    <variation>A</variation>
    <location>
        <position position="21"/>
    </location>
</feature>
<feature type="mutagenesis site" description="Strongly impairs C5a binding; when associated with 2-D--L-22 Del." evidence="16">
    <original>D</original>
    <variation>A</variation>
    <location>
        <position position="27"/>
    </location>
</feature>
<feature type="mutagenesis site" description="Fails to homodimerize." evidence="6">
    <original>C</original>
    <variation>S</variation>
    <location>
        <position position="144"/>
    </location>
</feature>
<feature type="mutagenesis site" description="No effect on homodimer formation." evidence="6">
    <original>C</original>
    <variation>S</variation>
    <location>
        <position position="157"/>
    </location>
</feature>
<feature type="mutagenesis site" description="Impairs C5a binding (10-fold reduction) and C5a-induced 5-HT secretion." evidence="14">
    <original>E</original>
    <variation>Q</variation>
    <location>
        <position position="199"/>
    </location>
</feature>
<feature type="mutagenesis site" description="No effect on homodimer formation." evidence="6">
    <original>C</original>
    <variation>S</variation>
    <location>
        <position position="221"/>
    </location>
</feature>
<feature type="strand" evidence="25">
    <location>
        <begin position="16"/>
        <end position="18"/>
    </location>
</feature>
<feature type="helix" evidence="27">
    <location>
        <begin position="35"/>
        <end position="65"/>
    </location>
</feature>
<feature type="turn" evidence="27">
    <location>
        <begin position="66"/>
        <end position="68"/>
    </location>
</feature>
<feature type="helix" evidence="27">
    <location>
        <begin position="70"/>
        <end position="86"/>
    </location>
</feature>
<feature type="helix" evidence="27">
    <location>
        <begin position="89"/>
        <end position="97"/>
    </location>
</feature>
<feature type="turn" evidence="27">
    <location>
        <begin position="98"/>
        <end position="100"/>
    </location>
</feature>
<feature type="helix" evidence="27">
    <location>
        <begin position="106"/>
        <end position="111"/>
    </location>
</feature>
<feature type="helix" evidence="27">
    <location>
        <begin position="112"/>
        <end position="114"/>
    </location>
</feature>
<feature type="helix" evidence="27">
    <location>
        <begin position="115"/>
        <end position="139"/>
    </location>
</feature>
<feature type="helix" evidence="27">
    <location>
        <begin position="141"/>
        <end position="146"/>
    </location>
</feature>
<feature type="helix" evidence="27">
    <location>
        <begin position="150"/>
        <end position="173"/>
    </location>
</feature>
<feature type="strand" evidence="27">
    <location>
        <begin position="175"/>
        <end position="180"/>
    </location>
</feature>
<feature type="turn" evidence="27">
    <location>
        <begin position="181"/>
        <end position="184"/>
    </location>
</feature>
<feature type="strand" evidence="27">
    <location>
        <begin position="185"/>
        <end position="190"/>
    </location>
</feature>
<feature type="turn" evidence="30">
    <location>
        <begin position="193"/>
        <end position="195"/>
    </location>
</feature>
<feature type="helix" evidence="27">
    <location>
        <begin position="196"/>
        <end position="210"/>
    </location>
</feature>
<feature type="helix" evidence="27">
    <location>
        <begin position="212"/>
        <end position="230"/>
    </location>
</feature>
<feature type="strand" evidence="26">
    <location>
        <begin position="233"/>
        <end position="235"/>
    </location>
</feature>
<feature type="helix" evidence="27">
    <location>
        <begin position="238"/>
        <end position="266"/>
    </location>
</feature>
<feature type="strand" evidence="28">
    <location>
        <begin position="270"/>
        <end position="272"/>
    </location>
</feature>
<feature type="helix" evidence="27">
    <location>
        <begin position="273"/>
        <end position="280"/>
    </location>
</feature>
<feature type="helix" evidence="27">
    <location>
        <begin position="282"/>
        <end position="289"/>
    </location>
</feature>
<feature type="helix" evidence="27">
    <location>
        <begin position="292"/>
        <end position="305"/>
    </location>
</feature>
<feature type="helix" evidence="28">
    <location>
        <begin position="307"/>
        <end position="313"/>
    </location>
</feature>
<feature type="helix" evidence="27">
    <location>
        <begin position="315"/>
        <end position="323"/>
    </location>
</feature>
<feature type="strand" evidence="29">
    <location>
        <begin position="337"/>
        <end position="339"/>
    </location>
</feature>
<dbReference type="EMBL" id="M62505">
    <property type="protein sequence ID" value="AAA62831.1"/>
    <property type="molecule type" value="mRNA"/>
</dbReference>
<dbReference type="EMBL" id="X57250">
    <property type="protein sequence ID" value="CAA40530.1"/>
    <property type="molecule type" value="mRNA"/>
</dbReference>
<dbReference type="EMBL" id="X58674">
    <property type="protein sequence ID" value="CAB37830.1"/>
    <property type="molecule type" value="Genomic_DNA"/>
</dbReference>
<dbReference type="EMBL" id="AY221091">
    <property type="protein sequence ID" value="AAO65969.1"/>
    <property type="molecule type" value="Genomic_DNA"/>
</dbReference>
<dbReference type="EMBL" id="BT007358">
    <property type="protein sequence ID" value="AAP36022.1"/>
    <property type="molecule type" value="mRNA"/>
</dbReference>
<dbReference type="EMBL" id="AC099491">
    <property type="status" value="NOT_ANNOTATED_CDS"/>
    <property type="molecule type" value="Genomic_DNA"/>
</dbReference>
<dbReference type="EMBL" id="BC008982">
    <property type="protein sequence ID" value="AAH08982.1"/>
    <property type="molecule type" value="mRNA"/>
</dbReference>
<dbReference type="EMBL" id="S56556">
    <property type="protein sequence ID" value="AAD14919.1"/>
    <property type="molecule type" value="Genomic_DNA"/>
</dbReference>
<dbReference type="EMBL" id="S56557">
    <property type="protein sequence ID" value="AAD14919.1"/>
    <property type="status" value="JOINED"/>
    <property type="molecule type" value="Genomic_DNA"/>
</dbReference>
<dbReference type="CCDS" id="CCDS33063.1"/>
<dbReference type="PIR" id="A37963">
    <property type="entry name" value="A37963"/>
</dbReference>
<dbReference type="RefSeq" id="NP_001727.2">
    <property type="nucleotide sequence ID" value="NM_001736.4"/>
</dbReference>
<dbReference type="PDB" id="2K3U">
    <property type="method" value="NMR"/>
    <property type="chains" value="B=7-28"/>
</dbReference>
<dbReference type="PDB" id="5O9H">
    <property type="method" value="X-ray"/>
    <property type="resolution" value="2.70 A"/>
    <property type="chains" value="A/B=31-333"/>
</dbReference>
<dbReference type="PDB" id="6C1Q">
    <property type="method" value="X-ray"/>
    <property type="resolution" value="2.90 A"/>
    <property type="chains" value="B=30-331"/>
</dbReference>
<dbReference type="PDB" id="6C1R">
    <property type="method" value="X-ray"/>
    <property type="resolution" value="2.20 A"/>
    <property type="chains" value="B=30-331"/>
</dbReference>
<dbReference type="PDB" id="7Y64">
    <property type="method" value="EM"/>
    <property type="resolution" value="2.90 A"/>
    <property type="chains" value="D=1-330"/>
</dbReference>
<dbReference type="PDB" id="7Y65">
    <property type="method" value="EM"/>
    <property type="resolution" value="3.20 A"/>
    <property type="chains" value="D=1-330"/>
</dbReference>
<dbReference type="PDB" id="7Y66">
    <property type="method" value="EM"/>
    <property type="resolution" value="2.90 A"/>
    <property type="chains" value="D=1-330"/>
</dbReference>
<dbReference type="PDB" id="7Y67">
    <property type="method" value="EM"/>
    <property type="resolution" value="2.80 A"/>
    <property type="chains" value="D=1-330"/>
</dbReference>
<dbReference type="PDB" id="8GO8">
    <property type="method" value="EM"/>
    <property type="resolution" value="3.41 A"/>
    <property type="chains" value="U/V=331-350"/>
</dbReference>
<dbReference type="PDB" id="8GOO">
    <property type="method" value="EM"/>
    <property type="resolution" value="4.40 A"/>
    <property type="chains" value="G/U/V=331-350"/>
</dbReference>
<dbReference type="PDB" id="8HK5">
    <property type="method" value="EM"/>
    <property type="resolution" value="3.00 A"/>
    <property type="chains" value="A=1-350"/>
</dbReference>
<dbReference type="PDB" id="8I0N">
    <property type="method" value="EM"/>
    <property type="resolution" value="3.26 A"/>
    <property type="chains" value="U/V=334-342"/>
</dbReference>
<dbReference type="PDB" id="8I0Z">
    <property type="method" value="EM"/>
    <property type="resolution" value="4.33 A"/>
    <property type="chains" value="G/U/V=331-350"/>
</dbReference>
<dbReference type="PDB" id="8IA2">
    <property type="method" value="EM"/>
    <property type="resolution" value="3.21 A"/>
    <property type="chains" value="A=2-350"/>
</dbReference>
<dbReference type="PDB" id="8JZP">
    <property type="method" value="EM"/>
    <property type="resolution" value="3.45 A"/>
    <property type="chains" value="A=2-350"/>
</dbReference>
<dbReference type="PDB" id="8JZZ">
    <property type="method" value="EM"/>
    <property type="resolution" value="3.31 A"/>
    <property type="chains" value="A=2-350"/>
</dbReference>
<dbReference type="PDBsum" id="2K3U"/>
<dbReference type="PDBsum" id="5O9H"/>
<dbReference type="PDBsum" id="6C1Q"/>
<dbReference type="PDBsum" id="6C1R"/>
<dbReference type="PDBsum" id="7Y64"/>
<dbReference type="PDBsum" id="7Y65"/>
<dbReference type="PDBsum" id="7Y66"/>
<dbReference type="PDBsum" id="7Y67"/>
<dbReference type="PDBsum" id="8GO8"/>
<dbReference type="PDBsum" id="8GOO"/>
<dbReference type="PDBsum" id="8HK5"/>
<dbReference type="PDBsum" id="8I0N"/>
<dbReference type="PDBsum" id="8I0Z"/>
<dbReference type="PDBsum" id="8IA2"/>
<dbReference type="PDBsum" id="8JZP"/>
<dbReference type="PDBsum" id="8JZZ"/>
<dbReference type="EMDB" id="EMD-33633"/>
<dbReference type="EMDB" id="EMD-33634"/>
<dbReference type="EMDB" id="EMD-33635"/>
<dbReference type="EMDB" id="EMD-33636"/>
<dbReference type="EMDB" id="EMD-34173"/>
<dbReference type="EMDB" id="EMD-34178"/>
<dbReference type="EMDB" id="EMD-34846"/>
<dbReference type="EMDB" id="EMD-35104"/>
<dbReference type="EMDB" id="EMD-35114"/>
<dbReference type="EMDB" id="EMD-35292"/>
<dbReference type="EMDB" id="EMD-36750"/>
<dbReference type="EMDB" id="EMD-36755"/>
<dbReference type="SMR" id="P21730"/>
<dbReference type="BioGRID" id="107189">
    <property type="interactions" value="159"/>
</dbReference>
<dbReference type="CORUM" id="P21730"/>
<dbReference type="FunCoup" id="P21730">
    <property type="interactions" value="756"/>
</dbReference>
<dbReference type="IntAct" id="P21730">
    <property type="interactions" value="145"/>
</dbReference>
<dbReference type="STRING" id="9606.ENSP00000347197"/>
<dbReference type="BindingDB" id="P21730"/>
<dbReference type="ChEMBL" id="CHEMBL2373"/>
<dbReference type="DrugBank" id="DB15011">
    <property type="generic name" value="Avacopan"/>
</dbReference>
<dbReference type="DrugCentral" id="P21730"/>
<dbReference type="GuidetoPHARMACOLOGY" id="32"/>
<dbReference type="TCDB" id="9.A.14.13.26">
    <property type="family name" value="the g-protein-coupled receptor (gpcr) family"/>
</dbReference>
<dbReference type="GlyCosmos" id="P21730">
    <property type="glycosylation" value="1 site, No reported glycans"/>
</dbReference>
<dbReference type="GlyGen" id="P21730">
    <property type="glycosylation" value="1 site"/>
</dbReference>
<dbReference type="iPTMnet" id="P21730"/>
<dbReference type="PhosphoSitePlus" id="P21730"/>
<dbReference type="BioMuta" id="C5AR1"/>
<dbReference type="DMDM" id="311033355"/>
<dbReference type="jPOST" id="P21730"/>
<dbReference type="MassIVE" id="P21730"/>
<dbReference type="PaxDb" id="9606-ENSP00000347197"/>
<dbReference type="PeptideAtlas" id="P21730"/>
<dbReference type="ProteomicsDB" id="53893"/>
<dbReference type="ABCD" id="P21730">
    <property type="antibodies" value="5 sequenced antibodies"/>
</dbReference>
<dbReference type="Antibodypedia" id="2966">
    <property type="antibodies" value="1059 antibodies from 40 providers"/>
</dbReference>
<dbReference type="DNASU" id="728"/>
<dbReference type="Ensembl" id="ENST00000355085.4">
    <property type="protein sequence ID" value="ENSP00000347197.2"/>
    <property type="gene ID" value="ENSG00000197405.8"/>
</dbReference>
<dbReference type="GeneID" id="728"/>
<dbReference type="KEGG" id="hsa:728"/>
<dbReference type="MANE-Select" id="ENST00000355085.4">
    <property type="protein sequence ID" value="ENSP00000347197.2"/>
    <property type="RefSeq nucleotide sequence ID" value="NM_001736.4"/>
    <property type="RefSeq protein sequence ID" value="NP_001727.2"/>
</dbReference>
<dbReference type="UCSC" id="uc002pgj.2">
    <property type="organism name" value="human"/>
</dbReference>
<dbReference type="AGR" id="HGNC:1338"/>
<dbReference type="CTD" id="728"/>
<dbReference type="DisGeNET" id="728"/>
<dbReference type="GeneCards" id="C5AR1"/>
<dbReference type="HGNC" id="HGNC:1338">
    <property type="gene designation" value="C5AR1"/>
</dbReference>
<dbReference type="HPA" id="ENSG00000197405">
    <property type="expression patterns" value="Tissue enhanced (bone marrow, lymphoid tissue)"/>
</dbReference>
<dbReference type="MalaCards" id="C5AR1"/>
<dbReference type="MIM" id="113995">
    <property type="type" value="gene"/>
</dbReference>
<dbReference type="neXtProt" id="NX_P21730"/>
<dbReference type="OpenTargets" id="ENSG00000197405"/>
<dbReference type="PharmGKB" id="PA25920"/>
<dbReference type="VEuPathDB" id="HostDB:ENSG00000197405"/>
<dbReference type="eggNOG" id="ENOG502R35Z">
    <property type="taxonomic scope" value="Eukaryota"/>
</dbReference>
<dbReference type="GeneTree" id="ENSGT01130000278339"/>
<dbReference type="HOGENOM" id="CLU_009579_8_0_1"/>
<dbReference type="InParanoid" id="P21730"/>
<dbReference type="OMA" id="VAVWCLA"/>
<dbReference type="OrthoDB" id="9835842at2759"/>
<dbReference type="PAN-GO" id="P21730">
    <property type="GO annotations" value="7 GO annotations based on evolutionary models"/>
</dbReference>
<dbReference type="PhylomeDB" id="P21730"/>
<dbReference type="TreeFam" id="TF330976"/>
<dbReference type="PathwayCommons" id="P21730"/>
<dbReference type="Reactome" id="R-HSA-375276">
    <property type="pathway name" value="Peptide ligand-binding receptors"/>
</dbReference>
<dbReference type="Reactome" id="R-HSA-418594">
    <property type="pathway name" value="G alpha (i) signalling events"/>
</dbReference>
<dbReference type="Reactome" id="R-HSA-6798695">
    <property type="pathway name" value="Neutrophil degranulation"/>
</dbReference>
<dbReference type="Reactome" id="R-HSA-977606">
    <property type="pathway name" value="Regulation of Complement cascade"/>
</dbReference>
<dbReference type="SignaLink" id="P21730"/>
<dbReference type="SIGNOR" id="P21730"/>
<dbReference type="BioGRID-ORCS" id="728">
    <property type="hits" value="12 hits in 1141 CRISPR screens"/>
</dbReference>
<dbReference type="ChiTaRS" id="C5AR1">
    <property type="organism name" value="human"/>
</dbReference>
<dbReference type="EvolutionaryTrace" id="P21730"/>
<dbReference type="GeneWiki" id="C5a_receptor"/>
<dbReference type="GenomeRNAi" id="728"/>
<dbReference type="Pharos" id="P21730">
    <property type="development level" value="Tclin"/>
</dbReference>
<dbReference type="PRO" id="PR:P21730"/>
<dbReference type="Proteomes" id="UP000005640">
    <property type="component" value="Chromosome 19"/>
</dbReference>
<dbReference type="RNAct" id="P21730">
    <property type="molecule type" value="protein"/>
</dbReference>
<dbReference type="Bgee" id="ENSG00000197405">
    <property type="expression patterns" value="Expressed in blood and 144 other cell types or tissues"/>
</dbReference>
<dbReference type="ExpressionAtlas" id="P21730">
    <property type="expression patterns" value="baseline and differential"/>
</dbReference>
<dbReference type="GO" id="GO:0045177">
    <property type="term" value="C:apical part of cell"/>
    <property type="evidence" value="ECO:0000314"/>
    <property type="project" value="UniProtKB"/>
</dbReference>
<dbReference type="GO" id="GO:0016323">
    <property type="term" value="C:basolateral plasma membrane"/>
    <property type="evidence" value="ECO:0000314"/>
    <property type="project" value="UniProtKB"/>
</dbReference>
<dbReference type="GO" id="GO:0005886">
    <property type="term" value="C:plasma membrane"/>
    <property type="evidence" value="ECO:0000318"/>
    <property type="project" value="GO_Central"/>
</dbReference>
<dbReference type="GO" id="GO:0030667">
    <property type="term" value="C:secretory granule membrane"/>
    <property type="evidence" value="ECO:0000304"/>
    <property type="project" value="Reactome"/>
</dbReference>
<dbReference type="GO" id="GO:0004878">
    <property type="term" value="F:complement component C5a receptor activity"/>
    <property type="evidence" value="ECO:0000314"/>
    <property type="project" value="UniProtKB"/>
</dbReference>
<dbReference type="GO" id="GO:0004930">
    <property type="term" value="F:G protein-coupled receptor activity"/>
    <property type="evidence" value="ECO:0000353"/>
    <property type="project" value="UniProtKB"/>
</dbReference>
<dbReference type="GO" id="GO:0097242">
    <property type="term" value="P:amyloid-beta clearance"/>
    <property type="evidence" value="ECO:0000250"/>
    <property type="project" value="ARUK-UCL"/>
</dbReference>
<dbReference type="GO" id="GO:0048143">
    <property type="term" value="P:astrocyte activation"/>
    <property type="evidence" value="ECO:0000250"/>
    <property type="project" value="ARUK-UCL"/>
</dbReference>
<dbReference type="GO" id="GO:0006968">
    <property type="term" value="P:cellular defense response"/>
    <property type="evidence" value="ECO:0000304"/>
    <property type="project" value="ProtInc"/>
</dbReference>
<dbReference type="GO" id="GO:0006935">
    <property type="term" value="P:chemotaxis"/>
    <property type="evidence" value="ECO:0000304"/>
    <property type="project" value="ProtInc"/>
</dbReference>
<dbReference type="GO" id="GO:0050890">
    <property type="term" value="P:cognition"/>
    <property type="evidence" value="ECO:0000250"/>
    <property type="project" value="ARUK-UCL"/>
</dbReference>
<dbReference type="GO" id="GO:0038178">
    <property type="term" value="P:complement component C5a signaling pathway"/>
    <property type="evidence" value="ECO:0000314"/>
    <property type="project" value="UniProtKB"/>
</dbReference>
<dbReference type="GO" id="GO:0002430">
    <property type="term" value="P:complement receptor mediated signaling pathway"/>
    <property type="evidence" value="ECO:0000318"/>
    <property type="project" value="GO_Central"/>
</dbReference>
<dbReference type="GO" id="GO:0050830">
    <property type="term" value="P:defense response to Gram-positive bacterium"/>
    <property type="evidence" value="ECO:0007669"/>
    <property type="project" value="Ensembl"/>
</dbReference>
<dbReference type="GO" id="GO:0006955">
    <property type="term" value="P:immune response"/>
    <property type="evidence" value="ECO:0000304"/>
    <property type="project" value="ProtInc"/>
</dbReference>
<dbReference type="GO" id="GO:0006954">
    <property type="term" value="P:inflammatory response"/>
    <property type="evidence" value="ECO:0000318"/>
    <property type="project" value="GO_Central"/>
</dbReference>
<dbReference type="GO" id="GO:0001774">
    <property type="term" value="P:microglial cell activation"/>
    <property type="evidence" value="ECO:0000250"/>
    <property type="project" value="ARUK-UCL"/>
</dbReference>
<dbReference type="GO" id="GO:0042789">
    <property type="term" value="P:mRNA transcription by RNA polymerase II"/>
    <property type="evidence" value="ECO:0000314"/>
    <property type="project" value="UniProtKB"/>
</dbReference>
<dbReference type="GO" id="GO:0030593">
    <property type="term" value="P:neutrophil chemotaxis"/>
    <property type="evidence" value="ECO:0007669"/>
    <property type="project" value="Ensembl"/>
</dbReference>
<dbReference type="GO" id="GO:0007200">
    <property type="term" value="P:phospholipase C-activating G protein-coupled receptor signaling pathway"/>
    <property type="evidence" value="ECO:0000318"/>
    <property type="project" value="GO_Central"/>
</dbReference>
<dbReference type="GO" id="GO:0045766">
    <property type="term" value="P:positive regulation of angiogenesis"/>
    <property type="evidence" value="ECO:0007669"/>
    <property type="project" value="Ensembl"/>
</dbReference>
<dbReference type="GO" id="GO:0007204">
    <property type="term" value="P:positive regulation of cytosolic calcium ion concentration"/>
    <property type="evidence" value="ECO:0000318"/>
    <property type="project" value="GO_Central"/>
</dbReference>
<dbReference type="GO" id="GO:0050679">
    <property type="term" value="P:positive regulation of epithelial cell proliferation"/>
    <property type="evidence" value="ECO:0000314"/>
    <property type="project" value="UniProtKB"/>
</dbReference>
<dbReference type="GO" id="GO:0070374">
    <property type="term" value="P:positive regulation of ERK1 and ERK2 cascade"/>
    <property type="evidence" value="ECO:0000314"/>
    <property type="project" value="UniProtKB"/>
</dbReference>
<dbReference type="GO" id="GO:0010759">
    <property type="term" value="P:positive regulation of macrophage chemotaxis"/>
    <property type="evidence" value="ECO:0007669"/>
    <property type="project" value="Ensembl"/>
</dbReference>
<dbReference type="GO" id="GO:0090023">
    <property type="term" value="P:positive regulation of neutrophil chemotaxis"/>
    <property type="evidence" value="ECO:0007669"/>
    <property type="project" value="Ensembl"/>
</dbReference>
<dbReference type="GO" id="GO:0010575">
    <property type="term" value="P:positive regulation of vascular endothelial growth factor production"/>
    <property type="evidence" value="ECO:0007669"/>
    <property type="project" value="Ensembl"/>
</dbReference>
<dbReference type="GO" id="GO:0099172">
    <property type="term" value="P:presynapse organization"/>
    <property type="evidence" value="ECO:0000250"/>
    <property type="project" value="ARUK-UCL"/>
</dbReference>
<dbReference type="GO" id="GO:0032494">
    <property type="term" value="P:response to peptidoglycan"/>
    <property type="evidence" value="ECO:0007669"/>
    <property type="project" value="Ensembl"/>
</dbReference>
<dbReference type="GO" id="GO:0007606">
    <property type="term" value="P:sensory perception of chemical stimulus"/>
    <property type="evidence" value="ECO:0000304"/>
    <property type="project" value="ProtInc"/>
</dbReference>
<dbReference type="GO" id="GO:0007165">
    <property type="term" value="P:signal transduction"/>
    <property type="evidence" value="ECO:0000304"/>
    <property type="project" value="ProtInc"/>
</dbReference>
<dbReference type="CDD" id="cd15114">
    <property type="entry name" value="7tmA_C5aR"/>
    <property type="match status" value="1"/>
</dbReference>
<dbReference type="FunFam" id="1.20.1070.10:FF:000034">
    <property type="entry name" value="G-protein coupled receptor 1"/>
    <property type="match status" value="1"/>
</dbReference>
<dbReference type="Gene3D" id="1.20.1070.10">
    <property type="entry name" value="Rhodopsin 7-helix transmembrane proteins"/>
    <property type="match status" value="1"/>
</dbReference>
<dbReference type="InterPro" id="IPR002234">
    <property type="entry name" value="Anphylx_rcpt_C3a/C5a1-2"/>
</dbReference>
<dbReference type="InterPro" id="IPR000826">
    <property type="entry name" value="Formyl_rcpt-rel"/>
</dbReference>
<dbReference type="InterPro" id="IPR000276">
    <property type="entry name" value="GPCR_Rhodpsn"/>
</dbReference>
<dbReference type="InterPro" id="IPR017452">
    <property type="entry name" value="GPCR_Rhodpsn_7TM"/>
</dbReference>
<dbReference type="PANTHER" id="PTHR24225:SF29">
    <property type="entry name" value="C5A ANAPHYLATOXIN CHEMOTACTIC RECEPTOR 1"/>
    <property type="match status" value="1"/>
</dbReference>
<dbReference type="PANTHER" id="PTHR24225">
    <property type="entry name" value="CHEMOTACTIC RECEPTOR"/>
    <property type="match status" value="1"/>
</dbReference>
<dbReference type="Pfam" id="PF00001">
    <property type="entry name" value="7tm_1"/>
    <property type="match status" value="1"/>
</dbReference>
<dbReference type="PRINTS" id="PR01104">
    <property type="entry name" value="ANPHYLATOXNR"/>
</dbReference>
<dbReference type="PRINTS" id="PR00426">
    <property type="entry name" value="C5ANPHYLTXNR"/>
</dbReference>
<dbReference type="PRINTS" id="PR00237">
    <property type="entry name" value="GPCRRHODOPSN"/>
</dbReference>
<dbReference type="SUPFAM" id="SSF81321">
    <property type="entry name" value="Family A G protein-coupled receptor-like"/>
    <property type="match status" value="1"/>
</dbReference>
<dbReference type="PROSITE" id="PS00237">
    <property type="entry name" value="G_PROTEIN_RECEP_F1_1"/>
    <property type="match status" value="1"/>
</dbReference>
<dbReference type="PROSITE" id="PS50262">
    <property type="entry name" value="G_PROTEIN_RECEP_F1_2"/>
    <property type="match status" value="1"/>
</dbReference>
<sequence>MDSFNYTTPDYGHYDDKDTLDLNTPVDKTSNTLRVPDILALVIFAVVFLVGVLGNALVVWVTAFEAKRTINAIWFLNLAVADFLSCLALPILFTSIVQHHHWPFGGAACSILPSLILLNMYASILLLATISADRFLLVFKPIWCQNFRGAGLAWIACAVAWGLALLLTIPSFLYRVVREEYFPPKVLCGVDYSHDKRRERAVAIVRLVLGFLWPLLTLTICYTFILLRTWSRRATRSTKTLKVVVAVVASFFIFWLPYQVTGIMMSFLEPSSPTFLLLKKLDSLCVSFAYINCCINPIIYVVAGQGFQGRLRKSLPSLLRNVLTEESVVRESKSFTRSTVDTMAQKTQAV</sequence>
<protein>
    <recommendedName>
        <fullName>C5a anaphylatoxin chemotactic receptor 1</fullName>
    </recommendedName>
    <alternativeName>
        <fullName>C5a anaphylatoxin chemotactic receptor</fullName>
        <shortName>C5a-R</shortName>
        <shortName>C5aR</shortName>
    </alternativeName>
    <cdAntigenName>CD88</cdAntigenName>
</protein>
<name>C5AR1_HUMAN</name>
<keyword id="KW-0002">3D-structure</keyword>
<keyword id="KW-1003">Cell membrane</keyword>
<keyword id="KW-0145">Chemotaxis</keyword>
<keyword id="KW-0968">Cytoplasmic vesicle</keyword>
<keyword id="KW-1015">Disulfide bond</keyword>
<keyword id="KW-0297">G-protein coupled receptor</keyword>
<keyword id="KW-0325">Glycoprotein</keyword>
<keyword id="KW-0472">Membrane</keyword>
<keyword id="KW-0597">Phosphoprotein</keyword>
<keyword id="KW-1267">Proteomics identification</keyword>
<keyword id="KW-0675">Receptor</keyword>
<keyword id="KW-1185">Reference proteome</keyword>
<keyword id="KW-0765">Sulfation</keyword>
<keyword id="KW-0807">Transducer</keyword>
<keyword id="KW-0812">Transmembrane</keyword>
<keyword id="KW-1133">Transmembrane helix</keyword>
<accession>P21730</accession>
<organism>
    <name type="scientific">Homo sapiens</name>
    <name type="common">Human</name>
    <dbReference type="NCBI Taxonomy" id="9606"/>
    <lineage>
        <taxon>Eukaryota</taxon>
        <taxon>Metazoa</taxon>
        <taxon>Chordata</taxon>
        <taxon>Craniata</taxon>
        <taxon>Vertebrata</taxon>
        <taxon>Euteleostomi</taxon>
        <taxon>Mammalia</taxon>
        <taxon>Eutheria</taxon>
        <taxon>Euarchontoglires</taxon>
        <taxon>Primates</taxon>
        <taxon>Haplorrhini</taxon>
        <taxon>Catarrhini</taxon>
        <taxon>Hominidae</taxon>
        <taxon>Homo</taxon>
    </lineage>
</organism>
<gene>
    <name type="primary">C5AR1</name>
    <name type="synonym">C5AR</name>
    <name type="synonym">C5R1</name>
</gene>
<reference key="1">
    <citation type="journal article" date="1991" name="Biochemistry">
        <title>Expression cloning of a receptor for C5a anaphylatoxin on differentiated HL-60 cells.</title>
        <authorList>
            <person name="Boulay F."/>
            <person name="Mery L."/>
            <person name="Tardif M."/>
            <person name="Brouchon L."/>
            <person name="Vignais P."/>
        </authorList>
    </citation>
    <scope>NUCLEOTIDE SEQUENCE [MRNA]</scope>
    <scope>VARIANTS ASN-2 AND ASN-279</scope>
</reference>
<reference key="2">
    <citation type="journal article" date="1991" name="Nature">
        <title>The chemotactic receptor for human C5a anaphylatoxin.</title>
        <authorList>
            <person name="Gerard N.P."/>
            <person name="Gerard C."/>
        </authorList>
    </citation>
    <scope>NUCLEOTIDE SEQUENCE [GENOMIC DNA / MRNA]</scope>
    <scope>VARIANTS ASN-2 AND ASN-279</scope>
</reference>
<reference key="3">
    <citation type="submission" date="2003-01" db="EMBL/GenBank/DDBJ databases">
        <title>cDNA clones of human proteins involved in signal transduction sequenced by the Guthrie cDNA resource center (www.cdna.org).</title>
        <authorList>
            <person name="Kopatz S.A."/>
            <person name="Aronstam R.S."/>
            <person name="Sharma S.V."/>
        </authorList>
    </citation>
    <scope>NUCLEOTIDE SEQUENCE [LARGE SCALE MRNA]</scope>
    <scope>VARIANTS ASN-2 AND ASN-279</scope>
</reference>
<reference key="4">
    <citation type="submission" date="2003-05" db="EMBL/GenBank/DDBJ databases">
        <title>Cloning of human full-length CDSs in BD Creator(TM) system donor vector.</title>
        <authorList>
            <person name="Kalnine N."/>
            <person name="Chen X."/>
            <person name="Rolfs A."/>
            <person name="Halleck A."/>
            <person name="Hines L."/>
            <person name="Eisenstein S."/>
            <person name="Koundinya M."/>
            <person name="Raphael J."/>
            <person name="Moreira D."/>
            <person name="Kelley T."/>
            <person name="LaBaer J."/>
            <person name="Lin Y."/>
            <person name="Phelan M."/>
            <person name="Farmer A."/>
        </authorList>
    </citation>
    <scope>NUCLEOTIDE SEQUENCE [LARGE SCALE MRNA]</scope>
    <scope>VARIANTS ASN-2 AND ASN-279</scope>
</reference>
<reference key="5">
    <citation type="journal article" date="2004" name="Nature">
        <title>The DNA sequence and biology of human chromosome 19.</title>
        <authorList>
            <person name="Grimwood J."/>
            <person name="Gordon L.A."/>
            <person name="Olsen A.S."/>
            <person name="Terry A."/>
            <person name="Schmutz J."/>
            <person name="Lamerdin J.E."/>
            <person name="Hellsten U."/>
            <person name="Goodstein D."/>
            <person name="Couronne O."/>
            <person name="Tran-Gyamfi M."/>
            <person name="Aerts A."/>
            <person name="Altherr M."/>
            <person name="Ashworth L."/>
            <person name="Bajorek E."/>
            <person name="Black S."/>
            <person name="Branscomb E."/>
            <person name="Caenepeel S."/>
            <person name="Carrano A.V."/>
            <person name="Caoile C."/>
            <person name="Chan Y.M."/>
            <person name="Christensen M."/>
            <person name="Cleland C.A."/>
            <person name="Copeland A."/>
            <person name="Dalin E."/>
            <person name="Dehal P."/>
            <person name="Denys M."/>
            <person name="Detter J.C."/>
            <person name="Escobar J."/>
            <person name="Flowers D."/>
            <person name="Fotopulos D."/>
            <person name="Garcia C."/>
            <person name="Georgescu A.M."/>
            <person name="Glavina T."/>
            <person name="Gomez M."/>
            <person name="Gonzales E."/>
            <person name="Groza M."/>
            <person name="Hammon N."/>
            <person name="Hawkins T."/>
            <person name="Haydu L."/>
            <person name="Ho I."/>
            <person name="Huang W."/>
            <person name="Israni S."/>
            <person name="Jett J."/>
            <person name="Kadner K."/>
            <person name="Kimball H."/>
            <person name="Kobayashi A."/>
            <person name="Larionov V."/>
            <person name="Leem S.-H."/>
            <person name="Lopez F."/>
            <person name="Lou Y."/>
            <person name="Lowry S."/>
            <person name="Malfatti S."/>
            <person name="Martinez D."/>
            <person name="McCready P.M."/>
            <person name="Medina C."/>
            <person name="Morgan J."/>
            <person name="Nelson K."/>
            <person name="Nolan M."/>
            <person name="Ovcharenko I."/>
            <person name="Pitluck S."/>
            <person name="Pollard M."/>
            <person name="Popkie A.P."/>
            <person name="Predki P."/>
            <person name="Quan G."/>
            <person name="Ramirez L."/>
            <person name="Rash S."/>
            <person name="Retterer J."/>
            <person name="Rodriguez A."/>
            <person name="Rogers S."/>
            <person name="Salamov A."/>
            <person name="Salazar A."/>
            <person name="She X."/>
            <person name="Smith D."/>
            <person name="Slezak T."/>
            <person name="Solovyev V."/>
            <person name="Thayer N."/>
            <person name="Tice H."/>
            <person name="Tsai M."/>
            <person name="Ustaszewska A."/>
            <person name="Vo N."/>
            <person name="Wagner M."/>
            <person name="Wheeler J."/>
            <person name="Wu K."/>
            <person name="Xie G."/>
            <person name="Yang J."/>
            <person name="Dubchak I."/>
            <person name="Furey T.S."/>
            <person name="DeJong P."/>
            <person name="Dickson M."/>
            <person name="Gordon D."/>
            <person name="Eichler E.E."/>
            <person name="Pennacchio L.A."/>
            <person name="Richardson P."/>
            <person name="Stubbs L."/>
            <person name="Rokhsar D.S."/>
            <person name="Myers R.M."/>
            <person name="Rubin E.M."/>
            <person name="Lucas S.M."/>
        </authorList>
    </citation>
    <scope>NUCLEOTIDE SEQUENCE [LARGE SCALE GENOMIC DNA]</scope>
</reference>
<reference key="6">
    <citation type="journal article" date="2004" name="Genome Res.">
        <title>The status, quality, and expansion of the NIH full-length cDNA project: the Mammalian Gene Collection (MGC).</title>
        <authorList>
            <consortium name="The MGC Project Team"/>
        </authorList>
    </citation>
    <scope>NUCLEOTIDE SEQUENCE [LARGE SCALE MRNA]</scope>
    <scope>VARIANTS ASN-2 AND ASN-279</scope>
    <source>
        <tissue>Brain</tissue>
    </source>
</reference>
<reference key="7">
    <citation type="journal article" date="1993" name="Biochemistry">
        <title>Human chemotaxis receptor genes cluster at 19q13.3-13.4. Characterization of the human C5a receptor gene.</title>
        <authorList>
            <person name="Gerard N.P."/>
            <person name="Bao L."/>
            <person name="Xiao-Ping H."/>
            <person name="Eddy R.L. Jr."/>
            <person name="Shows T.B."/>
            <person name="Gerard C."/>
        </authorList>
    </citation>
    <scope>NUCLEOTIDE SEQUENCE [GENOMIC DNA] OF 1-3</scope>
    <scope>VARIANT ASN-2</scope>
</reference>
<reference key="8">
    <citation type="journal article" date="1994" name="J. Biol. Chem.">
        <title>The amino terminus of the human C5a receptor is required for high affinity C5a binding and for receptor activation by C5a but not C5a analogs.</title>
        <authorList>
            <person name="DeMartino J.A."/>
            <person name="Van Riper G."/>
            <person name="Siciliano S.J."/>
            <person name="Molineaux C.J."/>
            <person name="Konteatis Z.D."/>
            <person name="Rosen H."/>
            <person name="Springer M.S."/>
        </authorList>
    </citation>
    <scope>FUNCTION</scope>
    <scope>MUTAGENESIS OF 2-ASP--LEU-22; 2-ASP--SER-30; ASP-10; ASP-15; ASP-16; ASP-18 AND ASP-21</scope>
</reference>
<reference key="9">
    <citation type="journal article" date="1995" name="J. Biol. Chem.">
        <title>Mutation of glutamate 199 of the human C5a receptor defines a binding site for ligand distinct from the receptor N terminus.</title>
        <authorList>
            <person name="Monk P.N."/>
            <person name="Barker M.D."/>
            <person name="Partridge L.J."/>
            <person name="Pease J.E."/>
        </authorList>
    </citation>
    <scope>FUNCTION</scope>
    <scope>MUTAGENESIS OF GLU-199</scope>
</reference>
<reference key="10">
    <citation type="journal article" date="1995" name="J. Biol. Chem.">
        <title>Identification of the major phosphorylation sites in human C5a anaphylatoxin receptor in vivo.</title>
        <authorList>
            <person name="Giannini E."/>
            <person name="Brouchon L."/>
            <person name="Boulay F."/>
        </authorList>
    </citation>
    <scope>PHOSPHORYLATION AT SER-314; SER-317; SER-327; SER-332; SER-334 AND SER-338</scope>
</reference>
<reference key="11">
    <citation type="journal article" date="1998" name="J. Biol. Chem.">
        <title>Residues 21-30 within the extracellular N-terminal region of the C5a receptor represent a binding domain for the C5a anaphylatoxin.</title>
        <authorList>
            <person name="Chen Z."/>
            <person name="Zhang X."/>
            <person name="Gonnella N.C."/>
            <person name="Pellas T.C."/>
            <person name="Boyar W.C."/>
            <person name="Ni F."/>
        </authorList>
    </citation>
    <scope>FUNCTION AS A RECEPTOR FOR C5A</scope>
</reference>
<reference key="12">
    <citation type="journal article" date="2000" name="J. Biol. Chem.">
        <title>Human complement 5a (C5a) anaphylatoxin receptor (CD88) phosphorylation sites and their specific role in receptor phosphorylation and attenuation of G protein-mediated responses. Desensitization of C5a receptor controls superoxide production but not receptor sequestration in HL-60 cells.</title>
        <authorList>
            <person name="Christophe T."/>
            <person name="Rabiet M.J."/>
            <person name="Tardif M."/>
            <person name="Milcent M.D."/>
            <person name="Boulay F."/>
        </authorList>
    </citation>
    <scope>FUNCTION</scope>
    <scope>PHOSPHORYLATION AT SER-314; SER-317; SER-327; SER-332; SER-334 AND SER-338</scope>
</reference>
<reference key="13">
    <citation type="journal article" date="2001" name="J. Exp. Med.">
        <title>Sulfated tyrosines contribute to the formation of the c5a docking site of the human c5a anaphylatoxin receptor.</title>
        <authorList>
            <person name="Farzan M."/>
            <person name="Schnitzler C.E."/>
            <person name="Vasilieva N."/>
            <person name="Leung D."/>
            <person name="Kuhn J."/>
            <person name="Gerard C."/>
            <person name="Gerard N.P."/>
            <person name="Choe H."/>
        </authorList>
    </citation>
    <scope>SULFATION AT TYR-11 AND TYR-14</scope>
</reference>
<reference key="14">
    <citation type="journal article" date="2003" name="J. Biol. Chem.">
        <title>Phosphorylation of key serine residues is required for internalization of the complement 5a (C5a) anaphylatoxin receptor via a beta-arrestin, dynamin, and clathrin-dependent pathway.</title>
        <authorList>
            <person name="Braun L."/>
            <person name="Christophe T."/>
            <person name="Boulay F."/>
        </authorList>
    </citation>
    <scope>INTERACTION WITH ARRB1 AND ARRB2</scope>
    <scope>SUBCELLULAR LOCATION</scope>
    <scope>PHOSPHORYLATION</scope>
</reference>
<reference key="15">
    <citation type="journal article" date="2003" name="J. Biol. Chem.">
        <title>C5a receptor oligomerization. I. Disulfide trapping reveals oligomers and potential contact surfaces in a G protein-coupled receptor.</title>
        <authorList>
            <person name="Klco J.M."/>
            <person name="Lassere T.B."/>
            <person name="Baranski T.J."/>
        </authorList>
    </citation>
    <scope>SUBUNIT</scope>
    <scope>MUTAGENESIS OF CYS-144; CYS-157 AND CYS-221</scope>
</reference>
<reference key="16">
    <citation type="journal article" date="2004" name="J. Immunol.">
        <title>Chemotaxis inhibitory protein of Staphylococcus aureus binds specifically to the C5a and formylated peptide receptor.</title>
        <authorList>
            <person name="Postma B."/>
            <person name="Poppelier M.J.J.G."/>
            <person name="van Galen J.C."/>
            <person name="Prossnitz E.R."/>
            <person name="van Strijp J.A.G."/>
            <person name="de Haas C.J.C."/>
            <person name="van Kessel K.P.M."/>
        </authorList>
    </citation>
    <scope>FUNCTION</scope>
    <scope>INTERACTION WITH CHIPS</scope>
</reference>
<reference key="17">
    <citation type="journal article" date="2005" name="J. Biol. Chem.">
        <title>Residues 10-18 within the C5a receptor N terminus compose a binding domain for chemotaxis inhibitory protein of Staphylococcus aureus.</title>
        <authorList>
            <person name="Postma B."/>
            <person name="Kleibeuker W."/>
            <person name="Poppelier M.J.J.G."/>
            <person name="Boonstra M."/>
            <person name="van Kessel K.P.M."/>
            <person name="van Strijp J.A.G."/>
            <person name="de Haas C.J.C."/>
        </authorList>
    </citation>
    <scope>INTERACTION WITH CHIPS</scope>
    <scope>MUTAGENESIS OF ASP-10; GLY-12; TYR-14; ASP-15 AND ASP-18</scope>
</reference>
<reference key="18">
    <citation type="journal article" date="2011" name="Acta Pharmacol. Sin.">
        <title>Tyrosine sulfation in N-terminal domain of human C5a receptor is necessary for binding of chemotaxis inhibitory protein of Staphylococcus aureus.</title>
        <authorList>
            <person name="Liu Z.J."/>
            <person name="Yang Y.J."/>
            <person name="Jiang L."/>
            <person name="Xu Y.C."/>
            <person name="Wang A.X."/>
            <person name="Du G.H."/>
            <person name="Gao J.M."/>
        </authorList>
    </citation>
    <scope>INTERACTION WITH CHIPS</scope>
    <scope>MUTAGENESIS OF TYR-11 AND TYR-14</scope>
</reference>
<reference evidence="24" key="19">
    <citation type="journal article" date="2018" name="Nature">
        <title>Structure of the complement C5a receptor bound to the extra-helical antagonist NDT9513727.</title>
        <authorList>
            <person name="Robertson N."/>
            <person name="Rappas M."/>
            <person name="Dore A.S."/>
            <person name="Brown J."/>
            <person name="Bottegoni G."/>
            <person name="Koglin M."/>
            <person name="Cansfield J."/>
            <person name="Jazayeri A."/>
            <person name="Cooke R.M."/>
            <person name="Marshall F.H."/>
        </authorList>
    </citation>
    <scope>X-RAY CRYSTALLOGRAPHY (2.70 ANGSTROMS) OF 31-333</scope>
    <scope>FUNCTION</scope>
    <scope>SUBCELLULAR LOCATION</scope>
    <scope>TOPOLOGY</scope>
    <scope>DISULFIDE BONDS</scope>
</reference>
<evidence type="ECO:0000255" key="1"/>
<evidence type="ECO:0000255" key="2">
    <source>
        <dbReference type="PROSITE-ProRule" id="PRU00521"/>
    </source>
</evidence>
<evidence type="ECO:0000269" key="3">
    <source>
    </source>
</evidence>
<evidence type="ECO:0000269" key="4">
    <source>
    </source>
</evidence>
<evidence type="ECO:0000269" key="5">
    <source>
    </source>
</evidence>
<evidence type="ECO:0000269" key="6">
    <source>
    </source>
</evidence>
<evidence type="ECO:0000269" key="7">
    <source>
    </source>
</evidence>
<evidence type="ECO:0000269" key="8">
    <source>
    </source>
</evidence>
<evidence type="ECO:0000269" key="9">
    <source>
    </source>
</evidence>
<evidence type="ECO:0000269" key="10">
    <source>
    </source>
</evidence>
<evidence type="ECO:0000269" key="11">
    <source>
    </source>
</evidence>
<evidence type="ECO:0000269" key="12">
    <source>
    </source>
</evidence>
<evidence type="ECO:0000269" key="13">
    <source>
    </source>
</evidence>
<evidence type="ECO:0000269" key="14">
    <source>
    </source>
</evidence>
<evidence type="ECO:0000269" key="15">
    <source>
    </source>
</evidence>
<evidence type="ECO:0000269" key="16">
    <source>
    </source>
</evidence>
<evidence type="ECO:0000269" key="17">
    <source>
    </source>
</evidence>
<evidence type="ECO:0000269" key="18">
    <source>
    </source>
</evidence>
<evidence type="ECO:0000269" key="19">
    <source ref="3"/>
</evidence>
<evidence type="ECO:0000269" key="20">
    <source ref="4"/>
</evidence>
<evidence type="ECO:0000303" key="21">
    <source>
    </source>
</evidence>
<evidence type="ECO:0000303" key="22">
    <source>
    </source>
</evidence>
<evidence type="ECO:0000305" key="23">
    <source>
    </source>
</evidence>
<evidence type="ECO:0007744" key="24">
    <source>
        <dbReference type="PDB" id="5O9H"/>
    </source>
</evidence>
<evidence type="ECO:0007829" key="25">
    <source>
        <dbReference type="PDB" id="2K3U"/>
    </source>
</evidence>
<evidence type="ECO:0007829" key="26">
    <source>
        <dbReference type="PDB" id="5O9H"/>
    </source>
</evidence>
<evidence type="ECO:0007829" key="27">
    <source>
        <dbReference type="PDB" id="6C1R"/>
    </source>
</evidence>
<evidence type="ECO:0007829" key="28">
    <source>
        <dbReference type="PDB" id="7Y67"/>
    </source>
</evidence>
<evidence type="ECO:0007829" key="29">
    <source>
        <dbReference type="PDB" id="8I0N"/>
    </source>
</evidence>
<evidence type="ECO:0007829" key="30">
    <source>
        <dbReference type="PDB" id="8IA2"/>
    </source>
</evidence>
<proteinExistence type="evidence at protein level"/>
<comment type="function">
    <text evidence="3 7 10 13 14 16 18">Receptor for the chemotactic and inflammatory peptide anaphylatoxin C5a (PubMed:10636859, PubMed:15153520, PubMed:1847994, PubMed:29300009, PubMed:7622471, PubMed:8182049, PubMed:9553099). The ligand interacts with at least two sites on the receptor: a high-affinity site on the extracellular N-terminus, and a second site in the transmembrane region which activates downstream signaling events (PubMed:7622471, PubMed:8182049, PubMed:9553099). Receptor activation stimulates chemotaxis, granule enzyme release, intracellular calcium release and superoxide anion production (PubMed:10636859, PubMed:15153520).</text>
</comment>
<comment type="subunit">
    <text evidence="5 6 7 9 12 21">Homodimer. May also form higher-order oligomers (PubMed:12835319). Interacts (when phosphorylated) with ARRB1 and ARRB2; the interaction is associated with internalization of C5aR (PubMed:12464600). Interacts (via N-terminal domain) with S.aureus chemotaxis inhibitory protein (CHIPS); the interaction blocks the receptor and may thus inhibit the immune response (PubMed:15153520, PubMed:15542591, PubMed:21706042).</text>
</comment>
<comment type="subcellular location">
    <subcellularLocation>
        <location evidence="5 13">Cell membrane</location>
        <topology evidence="13">Multi-pass membrane protein</topology>
    </subcellularLocation>
    <subcellularLocation>
        <location evidence="5">Cytoplasmic vesicle</location>
    </subcellularLocation>
    <text evidence="5">Phosphorylated C5aR colocalizes with ARRB1 and ARRB2 in cytoplasmic vesicles.</text>
</comment>
<comment type="PTM">
    <text evidence="4 22">Sulfation plays a critical role in the association of C5aR with C5a, but no significant role in the ability of the receptor to transduce a signal and mobilize calcium in response to a small a small peptide agonist (PubMed:11342590). Sulfation at Tyr-14 is important for CHIPS binding (PubMed:21706042).</text>
</comment>
<comment type="PTM">
    <text evidence="3 5">Phosphorylated on serine residues in response to C5a binding, resulting in internalization of the receptor and short-term desensitization to the ligand. The key residues involved in this process are Ser-334 and Ser-338.</text>
</comment>
<comment type="similarity">
    <text evidence="2">Belongs to the G-protein coupled receptor 1 family.</text>
</comment>